<comment type="catalytic activity">
    <reaction evidence="1">
        <text>(2R)-3-phosphoglycerate + ATP = (2R)-3-phospho-glyceroyl phosphate + ADP</text>
        <dbReference type="Rhea" id="RHEA:14801"/>
        <dbReference type="ChEBI" id="CHEBI:30616"/>
        <dbReference type="ChEBI" id="CHEBI:57604"/>
        <dbReference type="ChEBI" id="CHEBI:58272"/>
        <dbReference type="ChEBI" id="CHEBI:456216"/>
        <dbReference type="EC" id="2.7.2.3"/>
    </reaction>
</comment>
<comment type="pathway">
    <text evidence="1">Carbohydrate degradation; glycolysis; pyruvate from D-glyceraldehyde 3-phosphate: step 2/5.</text>
</comment>
<comment type="subunit">
    <text evidence="1">Monomer.</text>
</comment>
<comment type="subcellular location">
    <subcellularLocation>
        <location evidence="1">Cytoplasm</location>
    </subcellularLocation>
</comment>
<comment type="similarity">
    <text evidence="1">Belongs to the phosphoglycerate kinase family.</text>
</comment>
<feature type="chain" id="PRO_1000076603" description="Phosphoglycerate kinase">
    <location>
        <begin position="1"/>
        <end position="387"/>
    </location>
</feature>
<feature type="binding site" evidence="1">
    <location>
        <begin position="21"/>
        <end position="23"/>
    </location>
    <ligand>
        <name>substrate</name>
    </ligand>
</feature>
<feature type="binding site" evidence="1">
    <location>
        <position position="36"/>
    </location>
    <ligand>
        <name>substrate</name>
    </ligand>
</feature>
<feature type="binding site" evidence="1">
    <location>
        <begin position="59"/>
        <end position="62"/>
    </location>
    <ligand>
        <name>substrate</name>
    </ligand>
</feature>
<feature type="binding site" evidence="1">
    <location>
        <position position="113"/>
    </location>
    <ligand>
        <name>substrate</name>
    </ligand>
</feature>
<feature type="binding site" evidence="1">
    <location>
        <position position="146"/>
    </location>
    <ligand>
        <name>substrate</name>
    </ligand>
</feature>
<feature type="binding site" evidence="1">
    <location>
        <position position="197"/>
    </location>
    <ligand>
        <name>ATP</name>
        <dbReference type="ChEBI" id="CHEBI:30616"/>
    </ligand>
</feature>
<feature type="binding site" evidence="1">
    <location>
        <position position="314"/>
    </location>
    <ligand>
        <name>ATP</name>
        <dbReference type="ChEBI" id="CHEBI:30616"/>
    </ligand>
</feature>
<feature type="binding site" evidence="1">
    <location>
        <begin position="340"/>
        <end position="343"/>
    </location>
    <ligand>
        <name>ATP</name>
        <dbReference type="ChEBI" id="CHEBI:30616"/>
    </ligand>
</feature>
<evidence type="ECO:0000255" key="1">
    <source>
        <dbReference type="HAMAP-Rule" id="MF_00145"/>
    </source>
</evidence>
<dbReference type="EC" id="2.7.2.3" evidence="1"/>
<dbReference type="EMBL" id="CP000880">
    <property type="protein sequence ID" value="ABX24349.1"/>
    <property type="molecule type" value="Genomic_DNA"/>
</dbReference>
<dbReference type="SMR" id="A9MRF1"/>
<dbReference type="STRING" id="41514.SARI_04576"/>
<dbReference type="KEGG" id="ses:SARI_04576"/>
<dbReference type="HOGENOM" id="CLU_025427_0_2_6"/>
<dbReference type="UniPathway" id="UPA00109">
    <property type="reaction ID" value="UER00185"/>
</dbReference>
<dbReference type="Proteomes" id="UP000002084">
    <property type="component" value="Chromosome"/>
</dbReference>
<dbReference type="GO" id="GO:0005829">
    <property type="term" value="C:cytosol"/>
    <property type="evidence" value="ECO:0007669"/>
    <property type="project" value="TreeGrafter"/>
</dbReference>
<dbReference type="GO" id="GO:0043531">
    <property type="term" value="F:ADP binding"/>
    <property type="evidence" value="ECO:0007669"/>
    <property type="project" value="TreeGrafter"/>
</dbReference>
<dbReference type="GO" id="GO:0005524">
    <property type="term" value="F:ATP binding"/>
    <property type="evidence" value="ECO:0007669"/>
    <property type="project" value="UniProtKB-KW"/>
</dbReference>
<dbReference type="GO" id="GO:0004618">
    <property type="term" value="F:phosphoglycerate kinase activity"/>
    <property type="evidence" value="ECO:0007669"/>
    <property type="project" value="UniProtKB-UniRule"/>
</dbReference>
<dbReference type="GO" id="GO:0006094">
    <property type="term" value="P:gluconeogenesis"/>
    <property type="evidence" value="ECO:0007669"/>
    <property type="project" value="TreeGrafter"/>
</dbReference>
<dbReference type="GO" id="GO:0006096">
    <property type="term" value="P:glycolytic process"/>
    <property type="evidence" value="ECO:0007669"/>
    <property type="project" value="UniProtKB-UniRule"/>
</dbReference>
<dbReference type="FunFam" id="3.40.50.1260:FF:000001">
    <property type="entry name" value="Phosphoglycerate kinase"/>
    <property type="match status" value="1"/>
</dbReference>
<dbReference type="FunFam" id="3.40.50.1260:FF:000002">
    <property type="entry name" value="Phosphoglycerate kinase"/>
    <property type="match status" value="1"/>
</dbReference>
<dbReference type="Gene3D" id="3.40.50.1260">
    <property type="entry name" value="Phosphoglycerate kinase, N-terminal domain"/>
    <property type="match status" value="2"/>
</dbReference>
<dbReference type="HAMAP" id="MF_00145">
    <property type="entry name" value="Phosphoglyc_kinase"/>
    <property type="match status" value="1"/>
</dbReference>
<dbReference type="InterPro" id="IPR001576">
    <property type="entry name" value="Phosphoglycerate_kinase"/>
</dbReference>
<dbReference type="InterPro" id="IPR015911">
    <property type="entry name" value="Phosphoglycerate_kinase_CS"/>
</dbReference>
<dbReference type="InterPro" id="IPR015824">
    <property type="entry name" value="Phosphoglycerate_kinase_N"/>
</dbReference>
<dbReference type="InterPro" id="IPR036043">
    <property type="entry name" value="Phosphoglycerate_kinase_sf"/>
</dbReference>
<dbReference type="PANTHER" id="PTHR11406">
    <property type="entry name" value="PHOSPHOGLYCERATE KINASE"/>
    <property type="match status" value="1"/>
</dbReference>
<dbReference type="PANTHER" id="PTHR11406:SF23">
    <property type="entry name" value="PHOSPHOGLYCERATE KINASE 1, CHLOROPLASTIC-RELATED"/>
    <property type="match status" value="1"/>
</dbReference>
<dbReference type="Pfam" id="PF00162">
    <property type="entry name" value="PGK"/>
    <property type="match status" value="1"/>
</dbReference>
<dbReference type="PIRSF" id="PIRSF000724">
    <property type="entry name" value="Pgk"/>
    <property type="match status" value="1"/>
</dbReference>
<dbReference type="PRINTS" id="PR00477">
    <property type="entry name" value="PHGLYCKINASE"/>
</dbReference>
<dbReference type="SUPFAM" id="SSF53748">
    <property type="entry name" value="Phosphoglycerate kinase"/>
    <property type="match status" value="1"/>
</dbReference>
<dbReference type="PROSITE" id="PS00111">
    <property type="entry name" value="PGLYCERATE_KINASE"/>
    <property type="match status" value="1"/>
</dbReference>
<keyword id="KW-0067">ATP-binding</keyword>
<keyword id="KW-0963">Cytoplasm</keyword>
<keyword id="KW-0324">Glycolysis</keyword>
<keyword id="KW-0418">Kinase</keyword>
<keyword id="KW-0547">Nucleotide-binding</keyword>
<keyword id="KW-1185">Reference proteome</keyword>
<keyword id="KW-0808">Transferase</keyword>
<name>PGK_SALAR</name>
<sequence length="387" mass="41132">MSVIKMTDLDLAGKRVFIRADLNVPVKEGKVTSDARIRASLPTIELALKQGAKVMVTSHLGRPTEGEYNEEFSLLPVVNYLKDKLSNPVRLVKDYLDGVDVAEGELVVLENVRFNKGEKKDDEALSKKYAALCDVFVMDAFGTAHRAQASTHGIGKFADVACAGPLLAAELDALGKALKEPARPMVAIVGGSKVSTKLTVLDSLSKIADQLIVGGGIANTFVAAQGHSVGKSLYEADLVDEAKRLLTTCDIPVPTDVRVATEFSETAPATLKSVNDVKEDEQILDIGDASAQQLAEILKNAKTILWNGPVGVFEFPNFRKGTEIVANAIADSEAFSIAGGGDTLAAIDLFGIADKISYISTGGGAFLEFVEGKVLPAVAMLEERAKK</sequence>
<reference key="1">
    <citation type="submission" date="2007-11" db="EMBL/GenBank/DDBJ databases">
        <authorList>
            <consortium name="The Salmonella enterica serovar Arizonae Genome Sequencing Project"/>
            <person name="McClelland M."/>
            <person name="Sanderson E.K."/>
            <person name="Porwollik S."/>
            <person name="Spieth J."/>
            <person name="Clifton W.S."/>
            <person name="Fulton R."/>
            <person name="Chunyan W."/>
            <person name="Wollam A."/>
            <person name="Shah N."/>
            <person name="Pepin K."/>
            <person name="Bhonagiri V."/>
            <person name="Nash W."/>
            <person name="Johnson M."/>
            <person name="Thiruvilangam P."/>
            <person name="Wilson R."/>
        </authorList>
    </citation>
    <scope>NUCLEOTIDE SEQUENCE [LARGE SCALE GENOMIC DNA]</scope>
    <source>
        <strain>ATCC BAA-731 / CDC346-86 / RSK2980</strain>
    </source>
</reference>
<organism>
    <name type="scientific">Salmonella arizonae (strain ATCC BAA-731 / CDC346-86 / RSK2980)</name>
    <dbReference type="NCBI Taxonomy" id="41514"/>
    <lineage>
        <taxon>Bacteria</taxon>
        <taxon>Pseudomonadati</taxon>
        <taxon>Pseudomonadota</taxon>
        <taxon>Gammaproteobacteria</taxon>
        <taxon>Enterobacterales</taxon>
        <taxon>Enterobacteriaceae</taxon>
        <taxon>Salmonella</taxon>
    </lineage>
</organism>
<gene>
    <name evidence="1" type="primary">pgk</name>
    <name type="ordered locus">SARI_04576</name>
</gene>
<protein>
    <recommendedName>
        <fullName evidence="1">Phosphoglycerate kinase</fullName>
        <ecNumber evidence="1">2.7.2.3</ecNumber>
    </recommendedName>
</protein>
<accession>A9MRF1</accession>
<proteinExistence type="inferred from homology"/>